<comment type="function">
    <text evidence="1">Required for respiratory activity and maintenance and expression of the mitochondrial genome.</text>
</comment>
<comment type="subcellular location">
    <subcellularLocation>
        <location evidence="1">Mitochondrion</location>
    </subcellularLocation>
</comment>
<comment type="similarity">
    <text evidence="3">Belongs to the RRG9 family.</text>
</comment>
<evidence type="ECO:0000250" key="1"/>
<evidence type="ECO:0000255" key="2"/>
<evidence type="ECO:0000305" key="3"/>
<sequence>MNILRIACRSFHCLRCGPLLNENRGWSSKKIIKLVNKSSLSNKEFTEKVRDGTKDIPEWKKQKMAVRKKLQGQRWNPPKKISQEQMEALRLLKFNFPELTASDLADRFKISPEAVRRILKSNWKRTDEENNNTYERWKRRGERIKEMYQRKEDADFVSNQIVTSRKIILGSNSNSPELIARNVRTFKPFKPNNSTPEKKNTNKLYILKHLGSKQ</sequence>
<protein>
    <recommendedName>
        <fullName>Required for respiratory growth protein 9, mitochondrial</fullName>
    </recommendedName>
</protein>
<organism>
    <name type="scientific">Saccharomyces cerevisiae (strain YJM789)</name>
    <name type="common">Baker's yeast</name>
    <dbReference type="NCBI Taxonomy" id="307796"/>
    <lineage>
        <taxon>Eukaryota</taxon>
        <taxon>Fungi</taxon>
        <taxon>Dikarya</taxon>
        <taxon>Ascomycota</taxon>
        <taxon>Saccharomycotina</taxon>
        <taxon>Saccharomycetes</taxon>
        <taxon>Saccharomycetales</taxon>
        <taxon>Saccharomycetaceae</taxon>
        <taxon>Saccharomyces</taxon>
    </lineage>
</organism>
<keyword id="KW-0496">Mitochondrion</keyword>
<keyword id="KW-0809">Transit peptide</keyword>
<gene>
    <name type="primary">RRG9</name>
    <name type="ORF">SCY_4588</name>
</gene>
<accession>A6ZRM7</accession>
<name>RRG9_YEAS7</name>
<proteinExistence type="inferred from homology"/>
<dbReference type="EMBL" id="AAFW02000067">
    <property type="protein sequence ID" value="EDN62609.1"/>
    <property type="molecule type" value="Genomic_DNA"/>
</dbReference>
<dbReference type="SMR" id="A6ZRM7"/>
<dbReference type="HOGENOM" id="CLU_100293_0_0_1"/>
<dbReference type="Proteomes" id="UP000007060">
    <property type="component" value="Unassembled WGS sequence"/>
</dbReference>
<dbReference type="GO" id="GO:0005739">
    <property type="term" value="C:mitochondrion"/>
    <property type="evidence" value="ECO:0007669"/>
    <property type="project" value="UniProtKB-SubCell"/>
</dbReference>
<dbReference type="GO" id="GO:0005634">
    <property type="term" value="C:nucleus"/>
    <property type="evidence" value="ECO:0007669"/>
    <property type="project" value="TreeGrafter"/>
</dbReference>
<dbReference type="InterPro" id="IPR010487">
    <property type="entry name" value="NGRN/Rrg9"/>
</dbReference>
<dbReference type="PANTHER" id="PTHR13475">
    <property type="entry name" value="NEUGRIN"/>
    <property type="match status" value="1"/>
</dbReference>
<dbReference type="PANTHER" id="PTHR13475:SF3">
    <property type="entry name" value="NEUGRIN"/>
    <property type="match status" value="1"/>
</dbReference>
<dbReference type="Pfam" id="PF06413">
    <property type="entry name" value="Neugrin"/>
    <property type="match status" value="1"/>
</dbReference>
<feature type="transit peptide" description="Mitochondrion" evidence="2">
    <location>
        <begin position="1"/>
        <end position="18"/>
    </location>
</feature>
<feature type="chain" id="PRO_0000407973" description="Required for respiratory growth protein 9, mitochondrial">
    <location>
        <begin position="19"/>
        <end position="214"/>
    </location>
</feature>
<reference key="1">
    <citation type="journal article" date="2007" name="Proc. Natl. Acad. Sci. U.S.A.">
        <title>Genome sequencing and comparative analysis of Saccharomyces cerevisiae strain YJM789.</title>
        <authorList>
            <person name="Wei W."/>
            <person name="McCusker J.H."/>
            <person name="Hyman R.W."/>
            <person name="Jones T."/>
            <person name="Ning Y."/>
            <person name="Cao Z."/>
            <person name="Gu Z."/>
            <person name="Bruno D."/>
            <person name="Miranda M."/>
            <person name="Nguyen M."/>
            <person name="Wilhelmy J."/>
            <person name="Komp C."/>
            <person name="Tamse R."/>
            <person name="Wang X."/>
            <person name="Jia P."/>
            <person name="Luedi P."/>
            <person name="Oefner P.J."/>
            <person name="David L."/>
            <person name="Dietrich F.S."/>
            <person name="Li Y."/>
            <person name="Davis R.W."/>
            <person name="Steinmetz L.M."/>
        </authorList>
    </citation>
    <scope>NUCLEOTIDE SEQUENCE [LARGE SCALE GENOMIC DNA]</scope>
    <source>
        <strain>YJM789</strain>
    </source>
</reference>